<feature type="chain" id="PRO_1000004948" description="Peptide chain release factor 1">
    <location>
        <begin position="1"/>
        <end position="363"/>
    </location>
</feature>
<feature type="region of interest" description="Disordered" evidence="2">
    <location>
        <begin position="284"/>
        <end position="305"/>
    </location>
</feature>
<feature type="compositionally biased region" description="Basic and acidic residues" evidence="2">
    <location>
        <begin position="284"/>
        <end position="296"/>
    </location>
</feature>
<feature type="modified residue" description="N5-methylglutamine" evidence="1">
    <location>
        <position position="237"/>
    </location>
</feature>
<gene>
    <name evidence="1" type="primary">prfA</name>
    <name type="ordered locus">Shew185_3614</name>
</gene>
<evidence type="ECO:0000255" key="1">
    <source>
        <dbReference type="HAMAP-Rule" id="MF_00093"/>
    </source>
</evidence>
<evidence type="ECO:0000256" key="2">
    <source>
        <dbReference type="SAM" id="MobiDB-lite"/>
    </source>
</evidence>
<dbReference type="EMBL" id="CP000753">
    <property type="protein sequence ID" value="ABS09739.1"/>
    <property type="molecule type" value="Genomic_DNA"/>
</dbReference>
<dbReference type="RefSeq" id="WP_012090152.1">
    <property type="nucleotide sequence ID" value="NC_009665.1"/>
</dbReference>
<dbReference type="SMR" id="A6WSF0"/>
<dbReference type="KEGG" id="sbm:Shew185_3614"/>
<dbReference type="HOGENOM" id="CLU_036856_0_1_6"/>
<dbReference type="GO" id="GO:0005737">
    <property type="term" value="C:cytoplasm"/>
    <property type="evidence" value="ECO:0007669"/>
    <property type="project" value="UniProtKB-SubCell"/>
</dbReference>
<dbReference type="GO" id="GO:0016149">
    <property type="term" value="F:translation release factor activity, codon specific"/>
    <property type="evidence" value="ECO:0007669"/>
    <property type="project" value="UniProtKB-UniRule"/>
</dbReference>
<dbReference type="FunFam" id="3.30.160.20:FF:000004">
    <property type="entry name" value="Peptide chain release factor 1"/>
    <property type="match status" value="1"/>
</dbReference>
<dbReference type="FunFam" id="3.30.70.1660:FF:000002">
    <property type="entry name" value="Peptide chain release factor 1"/>
    <property type="match status" value="1"/>
</dbReference>
<dbReference type="FunFam" id="3.30.70.1660:FF:000004">
    <property type="entry name" value="Peptide chain release factor 1"/>
    <property type="match status" value="1"/>
</dbReference>
<dbReference type="Gene3D" id="3.30.160.20">
    <property type="match status" value="1"/>
</dbReference>
<dbReference type="Gene3D" id="3.30.70.1660">
    <property type="match status" value="2"/>
</dbReference>
<dbReference type="Gene3D" id="6.10.140.1950">
    <property type="match status" value="1"/>
</dbReference>
<dbReference type="HAMAP" id="MF_00093">
    <property type="entry name" value="Rel_fac_1"/>
    <property type="match status" value="1"/>
</dbReference>
<dbReference type="InterPro" id="IPR005139">
    <property type="entry name" value="PCRF"/>
</dbReference>
<dbReference type="InterPro" id="IPR000352">
    <property type="entry name" value="Pep_chain_release_fac_I"/>
</dbReference>
<dbReference type="InterPro" id="IPR045853">
    <property type="entry name" value="Pep_chain_release_fac_I_sf"/>
</dbReference>
<dbReference type="InterPro" id="IPR050057">
    <property type="entry name" value="Prokaryotic/Mito_RF"/>
</dbReference>
<dbReference type="InterPro" id="IPR004373">
    <property type="entry name" value="RF-1"/>
</dbReference>
<dbReference type="NCBIfam" id="TIGR00019">
    <property type="entry name" value="prfA"/>
    <property type="match status" value="1"/>
</dbReference>
<dbReference type="NCBIfam" id="NF001859">
    <property type="entry name" value="PRK00591.1"/>
    <property type="match status" value="1"/>
</dbReference>
<dbReference type="PANTHER" id="PTHR43804">
    <property type="entry name" value="LD18447P"/>
    <property type="match status" value="1"/>
</dbReference>
<dbReference type="PANTHER" id="PTHR43804:SF7">
    <property type="entry name" value="LD18447P"/>
    <property type="match status" value="1"/>
</dbReference>
<dbReference type="Pfam" id="PF03462">
    <property type="entry name" value="PCRF"/>
    <property type="match status" value="1"/>
</dbReference>
<dbReference type="Pfam" id="PF00472">
    <property type="entry name" value="RF-1"/>
    <property type="match status" value="1"/>
</dbReference>
<dbReference type="SMART" id="SM00937">
    <property type="entry name" value="PCRF"/>
    <property type="match status" value="1"/>
</dbReference>
<dbReference type="SUPFAM" id="SSF75620">
    <property type="entry name" value="Release factor"/>
    <property type="match status" value="1"/>
</dbReference>
<dbReference type="PROSITE" id="PS00745">
    <property type="entry name" value="RF_PROK_I"/>
    <property type="match status" value="1"/>
</dbReference>
<comment type="function">
    <text evidence="1">Peptide chain release factor 1 directs the termination of translation in response to the peptide chain termination codons UAG and UAA.</text>
</comment>
<comment type="subcellular location">
    <subcellularLocation>
        <location evidence="1">Cytoplasm</location>
    </subcellularLocation>
</comment>
<comment type="PTM">
    <text evidence="1">Methylated by PrmC. Methylation increases the termination efficiency of RF1.</text>
</comment>
<comment type="similarity">
    <text evidence="1">Belongs to the prokaryotic/mitochondrial release factor family.</text>
</comment>
<reference key="1">
    <citation type="submission" date="2007-07" db="EMBL/GenBank/DDBJ databases">
        <title>Complete sequence of chromosome of Shewanella baltica OS185.</title>
        <authorList>
            <consortium name="US DOE Joint Genome Institute"/>
            <person name="Copeland A."/>
            <person name="Lucas S."/>
            <person name="Lapidus A."/>
            <person name="Barry K."/>
            <person name="Glavina del Rio T."/>
            <person name="Dalin E."/>
            <person name="Tice H."/>
            <person name="Pitluck S."/>
            <person name="Sims D."/>
            <person name="Brettin T."/>
            <person name="Bruce D."/>
            <person name="Detter J.C."/>
            <person name="Han C."/>
            <person name="Schmutz J."/>
            <person name="Larimer F."/>
            <person name="Land M."/>
            <person name="Hauser L."/>
            <person name="Kyrpides N."/>
            <person name="Mikhailova N."/>
            <person name="Brettar I."/>
            <person name="Rodrigues J."/>
            <person name="Konstantinidis K."/>
            <person name="Tiedje J."/>
            <person name="Richardson P."/>
        </authorList>
    </citation>
    <scope>NUCLEOTIDE SEQUENCE [LARGE SCALE GENOMIC DNA]</scope>
    <source>
        <strain>OS185</strain>
    </source>
</reference>
<protein>
    <recommendedName>
        <fullName evidence="1">Peptide chain release factor 1</fullName>
        <shortName evidence="1">RF-1</shortName>
    </recommendedName>
</protein>
<organism>
    <name type="scientific">Shewanella baltica (strain OS185)</name>
    <dbReference type="NCBI Taxonomy" id="402882"/>
    <lineage>
        <taxon>Bacteria</taxon>
        <taxon>Pseudomonadati</taxon>
        <taxon>Pseudomonadota</taxon>
        <taxon>Gammaproteobacteria</taxon>
        <taxon>Alteromonadales</taxon>
        <taxon>Shewanellaceae</taxon>
        <taxon>Shewanella</taxon>
    </lineage>
</organism>
<accession>A6WSF0</accession>
<keyword id="KW-0963">Cytoplasm</keyword>
<keyword id="KW-0488">Methylation</keyword>
<keyword id="KW-0648">Protein biosynthesis</keyword>
<sequence>MKESVIRKLEGLLERNEEVMALLGDASVISDQDRFRALSKEYAQLEDVVAGFKAYQQAQADLDSAKEMLEEDDAEMREMAQEEMKAAKAKLEHLEDELQILLLPKDPDDDKNAFVEIRAGAGGDEAAIFAGDLFRMYSRYAEANRWQIEIMSCNEGEHGGFKEVIMKVSGEGVYGKLKFESGGHRVQRVPETESQGRVHTSAVTVVVLHEVPEAEAISINPADLKVDTFRSSGAGGQHVNKTDSAIRITHIPTGIVVECQDQRSQHKNRAQAMSVLAARIQAVEDEKRRSAEESTRRSLVASGDRSERVRTYNFPQGRVSEHRINLTLYRLNEVMEGDLDAILLPLMQEHQADQLAALADEQG</sequence>
<proteinExistence type="inferred from homology"/>
<name>RF1_SHEB8</name>